<comment type="function">
    <text evidence="1">NDH-1 shuttles electrons from NADH, via FMN and iron-sulfur (Fe-S) centers, to quinones in the respiratory chain. The immediate electron acceptor for the enzyme in this species is believed to be ubiquinone. Couples the redox reaction to proton translocation (for every two electrons transferred, four hydrogen ions are translocated across the cytoplasmic membrane), and thus conserves the redox energy in a proton gradient.</text>
</comment>
<comment type="catalytic activity">
    <reaction evidence="1">
        <text>a quinone + NADH + 5 H(+)(in) = a quinol + NAD(+) + 4 H(+)(out)</text>
        <dbReference type="Rhea" id="RHEA:57888"/>
        <dbReference type="ChEBI" id="CHEBI:15378"/>
        <dbReference type="ChEBI" id="CHEBI:24646"/>
        <dbReference type="ChEBI" id="CHEBI:57540"/>
        <dbReference type="ChEBI" id="CHEBI:57945"/>
        <dbReference type="ChEBI" id="CHEBI:132124"/>
    </reaction>
</comment>
<comment type="cofactor">
    <cofactor evidence="1">
        <name>[4Fe-4S] cluster</name>
        <dbReference type="ChEBI" id="CHEBI:49883"/>
    </cofactor>
    <text evidence="1">Binds 1 [4Fe-4S] cluster.</text>
</comment>
<comment type="subunit">
    <text evidence="1">NDH-1 is composed of 14 different subunits. Subunits NuoB, C, D, E, F, and G constitute the peripheral sector of the complex.</text>
</comment>
<comment type="subcellular location">
    <subcellularLocation>
        <location evidence="1">Cell inner membrane</location>
        <topology evidence="1">Peripheral membrane protein</topology>
        <orientation evidence="1">Cytoplasmic side</orientation>
    </subcellularLocation>
</comment>
<comment type="similarity">
    <text evidence="1">Belongs to the complex I 20 kDa subunit family.</text>
</comment>
<proteinExistence type="inferred from homology"/>
<dbReference type="EC" id="7.1.1.-" evidence="1"/>
<dbReference type="EMBL" id="CP000767">
    <property type="protein sequence ID" value="EAU00571.1"/>
    <property type="molecule type" value="Genomic_DNA"/>
</dbReference>
<dbReference type="RefSeq" id="WP_011991730.1">
    <property type="nucleotide sequence ID" value="NC_009715.2"/>
</dbReference>
<dbReference type="SMR" id="A7GW69"/>
<dbReference type="STRING" id="360105.CCV52592_1528"/>
<dbReference type="KEGG" id="ccv:CCV52592_1528"/>
<dbReference type="HOGENOM" id="CLU_055737_7_3_7"/>
<dbReference type="OrthoDB" id="9786737at2"/>
<dbReference type="Proteomes" id="UP000006380">
    <property type="component" value="Chromosome"/>
</dbReference>
<dbReference type="GO" id="GO:0005886">
    <property type="term" value="C:plasma membrane"/>
    <property type="evidence" value="ECO:0007669"/>
    <property type="project" value="UniProtKB-SubCell"/>
</dbReference>
<dbReference type="GO" id="GO:0045271">
    <property type="term" value="C:respiratory chain complex I"/>
    <property type="evidence" value="ECO:0007669"/>
    <property type="project" value="TreeGrafter"/>
</dbReference>
<dbReference type="GO" id="GO:0051539">
    <property type="term" value="F:4 iron, 4 sulfur cluster binding"/>
    <property type="evidence" value="ECO:0007669"/>
    <property type="project" value="UniProtKB-KW"/>
</dbReference>
<dbReference type="GO" id="GO:0005506">
    <property type="term" value="F:iron ion binding"/>
    <property type="evidence" value="ECO:0007669"/>
    <property type="project" value="UniProtKB-UniRule"/>
</dbReference>
<dbReference type="GO" id="GO:0008137">
    <property type="term" value="F:NADH dehydrogenase (ubiquinone) activity"/>
    <property type="evidence" value="ECO:0007669"/>
    <property type="project" value="InterPro"/>
</dbReference>
<dbReference type="GO" id="GO:0050136">
    <property type="term" value="F:NADH:ubiquinone reductase (non-electrogenic) activity"/>
    <property type="evidence" value="ECO:0007669"/>
    <property type="project" value="UniProtKB-UniRule"/>
</dbReference>
<dbReference type="GO" id="GO:0048038">
    <property type="term" value="F:quinone binding"/>
    <property type="evidence" value="ECO:0007669"/>
    <property type="project" value="UniProtKB-KW"/>
</dbReference>
<dbReference type="GO" id="GO:0009060">
    <property type="term" value="P:aerobic respiration"/>
    <property type="evidence" value="ECO:0007669"/>
    <property type="project" value="TreeGrafter"/>
</dbReference>
<dbReference type="GO" id="GO:0015990">
    <property type="term" value="P:electron transport coupled proton transport"/>
    <property type="evidence" value="ECO:0007669"/>
    <property type="project" value="TreeGrafter"/>
</dbReference>
<dbReference type="FunFam" id="3.40.50.12280:FF:000002">
    <property type="entry name" value="NADH-quinone oxidoreductase subunit B"/>
    <property type="match status" value="1"/>
</dbReference>
<dbReference type="Gene3D" id="3.40.50.12280">
    <property type="match status" value="1"/>
</dbReference>
<dbReference type="HAMAP" id="MF_01356">
    <property type="entry name" value="NDH1_NuoB"/>
    <property type="match status" value="1"/>
</dbReference>
<dbReference type="InterPro" id="IPR006137">
    <property type="entry name" value="NADH_UbQ_OxRdtase-like_20kDa"/>
</dbReference>
<dbReference type="InterPro" id="IPR006138">
    <property type="entry name" value="NADH_UQ_OxRdtase_20Kd_su"/>
</dbReference>
<dbReference type="NCBIfam" id="TIGR01957">
    <property type="entry name" value="nuoB_fam"/>
    <property type="match status" value="1"/>
</dbReference>
<dbReference type="NCBIfam" id="NF005012">
    <property type="entry name" value="PRK06411.1"/>
    <property type="match status" value="1"/>
</dbReference>
<dbReference type="PANTHER" id="PTHR11995">
    <property type="entry name" value="NADH DEHYDROGENASE"/>
    <property type="match status" value="1"/>
</dbReference>
<dbReference type="PANTHER" id="PTHR11995:SF14">
    <property type="entry name" value="NADH DEHYDROGENASE [UBIQUINONE] IRON-SULFUR PROTEIN 7, MITOCHONDRIAL"/>
    <property type="match status" value="1"/>
</dbReference>
<dbReference type="Pfam" id="PF01058">
    <property type="entry name" value="Oxidored_q6"/>
    <property type="match status" value="1"/>
</dbReference>
<dbReference type="SUPFAM" id="SSF56770">
    <property type="entry name" value="HydA/Nqo6-like"/>
    <property type="match status" value="1"/>
</dbReference>
<keyword id="KW-0004">4Fe-4S</keyword>
<keyword id="KW-0997">Cell inner membrane</keyword>
<keyword id="KW-1003">Cell membrane</keyword>
<keyword id="KW-0408">Iron</keyword>
<keyword id="KW-0411">Iron-sulfur</keyword>
<keyword id="KW-0472">Membrane</keyword>
<keyword id="KW-0479">Metal-binding</keyword>
<keyword id="KW-0520">NAD</keyword>
<keyword id="KW-0874">Quinone</keyword>
<keyword id="KW-1185">Reference proteome</keyword>
<keyword id="KW-1278">Translocase</keyword>
<keyword id="KW-0813">Transport</keyword>
<keyword id="KW-0830">Ubiquinone</keyword>
<accession>A7GW69</accession>
<gene>
    <name evidence="1" type="primary">nuoB</name>
    <name type="ordered locus">Ccur92_01570</name>
    <name type="ORF">CCV52592_1528</name>
</gene>
<sequence length="170" mass="19053">MAKHQVNYTANGGLPIVLTTVDRLVQWGRSNSLWALSYGLACCAIEMMASGASRYDFDRFGTIFRASPRHSEVMIIAGTLTKKHAEFTRRLYDQMPEPKWVISMGSCANTGGMFNTYSTVQGVDRIIPVDIYLPGCAPRPETLQYALMILQKKIRRQSAFRAQGVKRLEA</sequence>
<reference key="1">
    <citation type="submission" date="2007-07" db="EMBL/GenBank/DDBJ databases">
        <title>Genome sequence of Campylobacter curvus 525.92 isolated from human feces.</title>
        <authorList>
            <person name="Fouts D.E."/>
            <person name="Mongodin E.F."/>
            <person name="Puiu D."/>
            <person name="Sebastian Y."/>
            <person name="Miller W.G."/>
            <person name="Mandrell R.E."/>
            <person name="Lastovica A.J."/>
            <person name="Nelson K.E."/>
        </authorList>
    </citation>
    <scope>NUCLEOTIDE SEQUENCE [LARGE SCALE GENOMIC DNA]</scope>
    <source>
        <strain>525.92</strain>
    </source>
</reference>
<protein>
    <recommendedName>
        <fullName evidence="1">NADH-quinone oxidoreductase subunit B</fullName>
        <ecNumber evidence="1">7.1.1.-</ecNumber>
    </recommendedName>
    <alternativeName>
        <fullName evidence="1">NADH dehydrogenase I subunit B</fullName>
    </alternativeName>
    <alternativeName>
        <fullName evidence="1">NDH-1 subunit B</fullName>
    </alternativeName>
</protein>
<feature type="chain" id="PRO_1000166652" description="NADH-quinone oxidoreductase subunit B">
    <location>
        <begin position="1"/>
        <end position="170"/>
    </location>
</feature>
<feature type="binding site" evidence="1">
    <location>
        <position position="42"/>
    </location>
    <ligand>
        <name>[4Fe-4S] cluster</name>
        <dbReference type="ChEBI" id="CHEBI:49883"/>
    </ligand>
</feature>
<feature type="binding site" evidence="1">
    <location>
        <position position="43"/>
    </location>
    <ligand>
        <name>[4Fe-4S] cluster</name>
        <dbReference type="ChEBI" id="CHEBI:49883"/>
    </ligand>
</feature>
<feature type="binding site" evidence="1">
    <location>
        <position position="107"/>
    </location>
    <ligand>
        <name>[4Fe-4S] cluster</name>
        <dbReference type="ChEBI" id="CHEBI:49883"/>
    </ligand>
</feature>
<feature type="binding site" evidence="1">
    <location>
        <position position="136"/>
    </location>
    <ligand>
        <name>[4Fe-4S] cluster</name>
        <dbReference type="ChEBI" id="CHEBI:49883"/>
    </ligand>
</feature>
<organism>
    <name type="scientific">Campylobacter curvus (strain 525.92)</name>
    <dbReference type="NCBI Taxonomy" id="360105"/>
    <lineage>
        <taxon>Bacteria</taxon>
        <taxon>Pseudomonadati</taxon>
        <taxon>Campylobacterota</taxon>
        <taxon>Epsilonproteobacteria</taxon>
        <taxon>Campylobacterales</taxon>
        <taxon>Campylobacteraceae</taxon>
        <taxon>Campylobacter</taxon>
    </lineage>
</organism>
<name>NUOB_CAMC5</name>
<evidence type="ECO:0000255" key="1">
    <source>
        <dbReference type="HAMAP-Rule" id="MF_01356"/>
    </source>
</evidence>